<name>TF211_SCHPO</name>
<comment type="PTM">
    <text evidence="1">Processing of the polyproteins proceeds by an ordered pathway, called maturation. It involves the initial cleavage of a 27 kDa capsid protein (CA) from the N-terminus of the polyprotein, followed by the cleavage of a 56 kDa integrase (IN) from the C-terminus. This leaves a 72 kDa protease-reverse transcriptase fusion protein (PR-RT), which does not seem to be processed further (By similarity).</text>
</comment>
<comment type="miscellaneous">
    <text>Retrotransposons are mobile genetic entities that are able to replicate via an RNA intermediate and a reverse transcription step. In contrast to retroviruses, retrotransposons are non-infectious, lack an envelope and remain intracellular. Tf2 retrotransposons belong to the gypsy-like elements (metaviridae).</text>
</comment>
<organism>
    <name type="scientific">Schizosaccharomyces pombe (strain 972 / ATCC 24843)</name>
    <name type="common">Fission yeast</name>
    <dbReference type="NCBI Taxonomy" id="284812"/>
    <lineage>
        <taxon>Eukaryota</taxon>
        <taxon>Fungi</taxon>
        <taxon>Dikarya</taxon>
        <taxon>Ascomycota</taxon>
        <taxon>Taphrinomycotina</taxon>
        <taxon>Schizosaccharomycetes</taxon>
        <taxon>Schizosaccharomycetales</taxon>
        <taxon>Schizosaccharomycetaceae</taxon>
        <taxon>Schizosaccharomyces</taxon>
    </lineage>
</organism>
<sequence>MSYANYRYMKARAKRWRPENLDGIQTSDEHLINLFAKILSKHVPEIGKFDPNKDVESYISKLDQHFTEYPSLFPNEHTKRQYTLNHLEELEQQFAERMFSENGSLTWQELLRQPGKVQGSNKGDRLTKTFEGFRNQLDKVQFIRKLMSKANVDDFHTRLFILWMLPYSLRKLKERNYWKSEISEIYDFLEDKRTASYGKTHKRFQPQNKNLGKEFLPKKNNTTNSRNLRKTNISRIEYSSNKFLNHTRKRYEMVLQAELPDFKCSIPCLIDTGTQANIITEETVRAHKLPTRPWSKSVIYGGVYPNKINRKTIKLNISLNGISIKTEFLVVKKFSHPAAISFTTLYDNNIEISSSKHTLSQMNKVSNIVKEPELPDIYKEFKDITAETNTEKLPKPIKGLEFEVELTQENYRLPIRNYPLPPGKMQAMNDEINQGLKSGIIRESKAINACPVMFVPKKEGTLRMVVDYKPLNKYVKPNIYPLPLIEQLLAKIQGSTIFTKLDLKSAYHLIRVRKGDEHKLAFRCPRGVFEYLVMPYGISIAPAHFQYFINTILGEVKESHVVCYMDNILIHSKSESEHVKHVKDVLQKLKNANLIINQAKCEFHQSQVKFIGYHISEKGFTPCQENIDKVLQWKQPKNRKELRQFLGSVNYLRKFIPKTSQLTHPLNNLLKKDVRWKWTPTQTQAIENIKQCLVSPPVLRHFDFSKKILLETDASDVAVGAVLSQKHDDDKYYPVGYYSAKMSKAQLNYSVSDKEMLAIIKSLKHWRHYLESTIEPFKILTDHRNLIGRITNESEPENKRLARWQLFLQDFNFEINYRPGSANHIADALSRIVDETEPIPKDSEDNSINFVNQISITDDFKNQVVTEYTNDTKLLNLLNNEDKRVEENIQLKDGLLINSKDQILLPNDTQLTRTIIKKYHEEGKLIHPGIELLTNIILRRFTWKGIRKQIQEYVQNCHTCQINKSRNHKPYGPLQPIPPSERPWESLSMDFITALPESSGYNALFVVVDRFSKMAILVPCTKSITAEQTARMFDQRVIAYFGNPKEIIADNDHIFTSQTWKDFAHKYNFVMKFSLPYRPQTDGQTERTNQTVEKLLRCVCSTHPNTWVDHISLVQQSYNNAIHSATQMTPFEIVHRYSPALSPLELPSFSDKTDENSQETIQVFQTVKEHLNTNNIKMKKYFDMKIQEIEEFQPGDLVMVKRTKTGFLHKSNKLAPSFAGPFYVLQKSGPNNYELDLPDSIKHMFSSTFHVSHLEKYRHNSELNYATIDESDIGTILHILEHKNREQVLYLNVKYISNLNPSTIMSGWTTLATALQADKAIVNDYIKNNNLNI</sequence>
<accession>Q9UR07</accession>
<proteinExistence type="inferred from homology"/>
<dbReference type="EMBL" id="CU329671">
    <property type="protein sequence ID" value="CAB64236.1"/>
    <property type="molecule type" value="Genomic_DNA"/>
</dbReference>
<dbReference type="RefSeq" id="NP_596839.1">
    <property type="nucleotide sequence ID" value="NM_001023860.1"/>
</dbReference>
<dbReference type="SMR" id="Q9UR07"/>
<dbReference type="BioGRID" id="276578">
    <property type="interactions" value="2"/>
</dbReference>
<dbReference type="FunCoup" id="Q9UR07">
    <property type="interactions" value="2"/>
</dbReference>
<dbReference type="STRING" id="284812.Q9UR07"/>
<dbReference type="MEROPS" id="A02.051"/>
<dbReference type="PaxDb" id="4896-SPBC1289.17.1"/>
<dbReference type="EnsemblFungi" id="SPBC1289.17.1">
    <property type="protein sequence ID" value="SPBC1289.17.1:pep"/>
    <property type="gene ID" value="SPBC1289.17"/>
</dbReference>
<dbReference type="GeneID" id="2540036"/>
<dbReference type="KEGG" id="spo:2540036"/>
<dbReference type="PomBase" id="SPBC1289.17">
    <property type="gene designation" value="Tf2-11"/>
</dbReference>
<dbReference type="VEuPathDB" id="FungiDB:SPBC1289.17"/>
<dbReference type="eggNOG" id="KOG0017">
    <property type="taxonomic scope" value="Eukaryota"/>
</dbReference>
<dbReference type="HOGENOM" id="CLU_000384_4_0_1"/>
<dbReference type="InParanoid" id="Q9UR07"/>
<dbReference type="OMA" id="PETEAMK"/>
<dbReference type="PhylomeDB" id="Q9UR07"/>
<dbReference type="PRO" id="PR:Q9UR07"/>
<dbReference type="Proteomes" id="UP000002485">
    <property type="component" value="Chromosome II"/>
</dbReference>
<dbReference type="GO" id="GO:0005634">
    <property type="term" value="C:nucleus"/>
    <property type="evidence" value="ECO:0007669"/>
    <property type="project" value="UniProtKB-ARBA"/>
</dbReference>
<dbReference type="GO" id="GO:0004190">
    <property type="term" value="F:aspartic-type endopeptidase activity"/>
    <property type="evidence" value="ECO:0007669"/>
    <property type="project" value="UniProtKB-KW"/>
</dbReference>
<dbReference type="GO" id="GO:0003677">
    <property type="term" value="F:DNA binding"/>
    <property type="evidence" value="ECO:0007669"/>
    <property type="project" value="UniProtKB-KW"/>
</dbReference>
<dbReference type="GO" id="GO:0003887">
    <property type="term" value="F:DNA-directed DNA polymerase activity"/>
    <property type="evidence" value="ECO:0007669"/>
    <property type="project" value="UniProtKB-KW"/>
</dbReference>
<dbReference type="GO" id="GO:0004519">
    <property type="term" value="F:endonuclease activity"/>
    <property type="evidence" value="ECO:0007669"/>
    <property type="project" value="UniProtKB-KW"/>
</dbReference>
<dbReference type="GO" id="GO:0046872">
    <property type="term" value="F:metal ion binding"/>
    <property type="evidence" value="ECO:0007669"/>
    <property type="project" value="UniProtKB-KW"/>
</dbReference>
<dbReference type="GO" id="GO:0003723">
    <property type="term" value="F:RNA binding"/>
    <property type="evidence" value="ECO:0007669"/>
    <property type="project" value="UniProtKB-KW"/>
</dbReference>
<dbReference type="GO" id="GO:0003964">
    <property type="term" value="F:RNA-directed DNA polymerase activity"/>
    <property type="evidence" value="ECO:0007669"/>
    <property type="project" value="UniProtKB-KW"/>
</dbReference>
<dbReference type="GO" id="GO:0015074">
    <property type="term" value="P:DNA integration"/>
    <property type="evidence" value="ECO:0007669"/>
    <property type="project" value="UniProtKB-KW"/>
</dbReference>
<dbReference type="GO" id="GO:0006310">
    <property type="term" value="P:DNA recombination"/>
    <property type="evidence" value="ECO:0007669"/>
    <property type="project" value="UniProtKB-KW"/>
</dbReference>
<dbReference type="GO" id="GO:0006508">
    <property type="term" value="P:proteolysis"/>
    <property type="evidence" value="ECO:0007669"/>
    <property type="project" value="UniProtKB-KW"/>
</dbReference>
<dbReference type="CDD" id="cd00303">
    <property type="entry name" value="retropepsin_like"/>
    <property type="match status" value="1"/>
</dbReference>
<dbReference type="CDD" id="cd09274">
    <property type="entry name" value="RNase_HI_RT_Ty3"/>
    <property type="match status" value="1"/>
</dbReference>
<dbReference type="CDD" id="cd01647">
    <property type="entry name" value="RT_LTR"/>
    <property type="match status" value="1"/>
</dbReference>
<dbReference type="FunFam" id="3.10.20.370:FF:000003">
    <property type="entry name" value="Transposon Tf2-6 polyprotein"/>
    <property type="match status" value="1"/>
</dbReference>
<dbReference type="FunFam" id="3.30.70.270:FF:000045">
    <property type="entry name" value="Transposon Tf2-7 polyprotein"/>
    <property type="match status" value="1"/>
</dbReference>
<dbReference type="Gene3D" id="1.10.340.70">
    <property type="match status" value="1"/>
</dbReference>
<dbReference type="Gene3D" id="3.10.20.370">
    <property type="match status" value="1"/>
</dbReference>
<dbReference type="Gene3D" id="3.30.70.270">
    <property type="match status" value="2"/>
</dbReference>
<dbReference type="Gene3D" id="2.40.70.10">
    <property type="entry name" value="Acid Proteases"/>
    <property type="match status" value="1"/>
</dbReference>
<dbReference type="Gene3D" id="3.10.10.10">
    <property type="entry name" value="HIV Type 1 Reverse Transcriptase, subunit A, domain 1"/>
    <property type="match status" value="1"/>
</dbReference>
<dbReference type="Gene3D" id="3.30.420.10">
    <property type="entry name" value="Ribonuclease H-like superfamily/Ribonuclease H"/>
    <property type="match status" value="1"/>
</dbReference>
<dbReference type="InterPro" id="IPR001969">
    <property type="entry name" value="Aspartic_peptidase_AS"/>
</dbReference>
<dbReference type="InterPro" id="IPR043502">
    <property type="entry name" value="DNA/RNA_pol_sf"/>
</dbReference>
<dbReference type="InterPro" id="IPR001584">
    <property type="entry name" value="Integrase_cat-core"/>
</dbReference>
<dbReference type="InterPro" id="IPR041588">
    <property type="entry name" value="Integrase_H2C2"/>
</dbReference>
<dbReference type="InterPro" id="IPR021109">
    <property type="entry name" value="Peptidase_aspartic_dom_sf"/>
</dbReference>
<dbReference type="InterPro" id="IPR050951">
    <property type="entry name" value="Retrovirus_Pol_polyprotein"/>
</dbReference>
<dbReference type="InterPro" id="IPR043128">
    <property type="entry name" value="Rev_trsase/Diguanyl_cyclase"/>
</dbReference>
<dbReference type="InterPro" id="IPR012337">
    <property type="entry name" value="RNaseH-like_sf"/>
</dbReference>
<dbReference type="InterPro" id="IPR036397">
    <property type="entry name" value="RNaseH_sf"/>
</dbReference>
<dbReference type="InterPro" id="IPR000477">
    <property type="entry name" value="RT_dom"/>
</dbReference>
<dbReference type="InterPro" id="IPR041577">
    <property type="entry name" value="RT_RNaseH_2"/>
</dbReference>
<dbReference type="InterPro" id="IPR056924">
    <property type="entry name" value="SH3_Tf2-1"/>
</dbReference>
<dbReference type="InterPro" id="IPR056930">
    <property type="entry name" value="Tf2-1-like_C"/>
</dbReference>
<dbReference type="InterPro" id="IPR024648">
    <property type="entry name" value="Tf2-1-like_dom"/>
</dbReference>
<dbReference type="PANTHER" id="PTHR37984">
    <property type="entry name" value="PROTEIN CBG26694"/>
    <property type="match status" value="1"/>
</dbReference>
<dbReference type="PANTHER" id="PTHR37984:SF5">
    <property type="entry name" value="PROTEIN NYNRIN-LIKE"/>
    <property type="match status" value="1"/>
</dbReference>
<dbReference type="Pfam" id="PF17921">
    <property type="entry name" value="Integrase_H2C2"/>
    <property type="match status" value="1"/>
</dbReference>
<dbReference type="Pfam" id="PF12382">
    <property type="entry name" value="Peptidase_A2_2"/>
    <property type="match status" value="1"/>
</dbReference>
<dbReference type="Pfam" id="PF17919">
    <property type="entry name" value="RT_RNaseH_2"/>
    <property type="match status" value="1"/>
</dbReference>
<dbReference type="Pfam" id="PF00665">
    <property type="entry name" value="rve"/>
    <property type="match status" value="1"/>
</dbReference>
<dbReference type="Pfam" id="PF00078">
    <property type="entry name" value="RVT_1"/>
    <property type="match status" value="1"/>
</dbReference>
<dbReference type="Pfam" id="PF24626">
    <property type="entry name" value="SH3_Tf2-1"/>
    <property type="match status" value="1"/>
</dbReference>
<dbReference type="Pfam" id="PF24614">
    <property type="entry name" value="Tf2-1_C"/>
    <property type="match status" value="1"/>
</dbReference>
<dbReference type="SUPFAM" id="SSF56672">
    <property type="entry name" value="DNA/RNA polymerases"/>
    <property type="match status" value="1"/>
</dbReference>
<dbReference type="SUPFAM" id="SSF53098">
    <property type="entry name" value="Ribonuclease H-like"/>
    <property type="match status" value="1"/>
</dbReference>
<dbReference type="PROSITE" id="PS00141">
    <property type="entry name" value="ASP_PROTEASE"/>
    <property type="match status" value="1"/>
</dbReference>
<dbReference type="PROSITE" id="PS50994">
    <property type="entry name" value="INTEGRASE"/>
    <property type="match status" value="1"/>
</dbReference>
<dbReference type="PROSITE" id="PS50878">
    <property type="entry name" value="RT_POL"/>
    <property type="match status" value="1"/>
</dbReference>
<evidence type="ECO:0000250" key="1"/>
<evidence type="ECO:0000255" key="2">
    <source>
        <dbReference type="PROSITE-ProRule" id="PRU00405"/>
    </source>
</evidence>
<evidence type="ECO:0000255" key="3">
    <source>
        <dbReference type="PROSITE-ProRule" id="PRU00457"/>
    </source>
</evidence>
<evidence type="ECO:0000255" key="4">
    <source>
        <dbReference type="PROSITE-ProRule" id="PRU10094"/>
    </source>
</evidence>
<protein>
    <recommendedName>
        <fullName>Transposon Tf2-11 polyprotein</fullName>
    </recommendedName>
    <alternativeName>
        <fullName>Retrotransposable element Tf2 155 kDa protein</fullName>
    </alternativeName>
</protein>
<reference key="1">
    <citation type="journal article" date="2002" name="Nature">
        <title>The genome sequence of Schizosaccharomyces pombe.</title>
        <authorList>
            <person name="Wood V."/>
            <person name="Gwilliam R."/>
            <person name="Rajandream M.A."/>
            <person name="Lyne M.H."/>
            <person name="Lyne R."/>
            <person name="Stewart A."/>
            <person name="Sgouros J.G."/>
            <person name="Peat N."/>
            <person name="Hayles J."/>
            <person name="Baker S.G."/>
            <person name="Basham D."/>
            <person name="Bowman S."/>
            <person name="Brooks K."/>
            <person name="Brown D."/>
            <person name="Brown S."/>
            <person name="Chillingworth T."/>
            <person name="Churcher C.M."/>
            <person name="Collins M."/>
            <person name="Connor R."/>
            <person name="Cronin A."/>
            <person name="Davis P."/>
            <person name="Feltwell T."/>
            <person name="Fraser A."/>
            <person name="Gentles S."/>
            <person name="Goble A."/>
            <person name="Hamlin N."/>
            <person name="Harris D.E."/>
            <person name="Hidalgo J."/>
            <person name="Hodgson G."/>
            <person name="Holroyd S."/>
            <person name="Hornsby T."/>
            <person name="Howarth S."/>
            <person name="Huckle E.J."/>
            <person name="Hunt S."/>
            <person name="Jagels K."/>
            <person name="James K.D."/>
            <person name="Jones L."/>
            <person name="Jones M."/>
            <person name="Leather S."/>
            <person name="McDonald S."/>
            <person name="McLean J."/>
            <person name="Mooney P."/>
            <person name="Moule S."/>
            <person name="Mungall K.L."/>
            <person name="Murphy L.D."/>
            <person name="Niblett D."/>
            <person name="Odell C."/>
            <person name="Oliver K."/>
            <person name="O'Neil S."/>
            <person name="Pearson D."/>
            <person name="Quail M.A."/>
            <person name="Rabbinowitsch E."/>
            <person name="Rutherford K.M."/>
            <person name="Rutter S."/>
            <person name="Saunders D."/>
            <person name="Seeger K."/>
            <person name="Sharp S."/>
            <person name="Skelton J."/>
            <person name="Simmonds M.N."/>
            <person name="Squares R."/>
            <person name="Squares S."/>
            <person name="Stevens K."/>
            <person name="Taylor K."/>
            <person name="Taylor R.G."/>
            <person name="Tivey A."/>
            <person name="Walsh S.V."/>
            <person name="Warren T."/>
            <person name="Whitehead S."/>
            <person name="Woodward J.R."/>
            <person name="Volckaert G."/>
            <person name="Aert R."/>
            <person name="Robben J."/>
            <person name="Grymonprez B."/>
            <person name="Weltjens I."/>
            <person name="Vanstreels E."/>
            <person name="Rieger M."/>
            <person name="Schaefer M."/>
            <person name="Mueller-Auer S."/>
            <person name="Gabel C."/>
            <person name="Fuchs M."/>
            <person name="Duesterhoeft A."/>
            <person name="Fritzc C."/>
            <person name="Holzer E."/>
            <person name="Moestl D."/>
            <person name="Hilbert H."/>
            <person name="Borzym K."/>
            <person name="Langer I."/>
            <person name="Beck A."/>
            <person name="Lehrach H."/>
            <person name="Reinhardt R."/>
            <person name="Pohl T.M."/>
            <person name="Eger P."/>
            <person name="Zimmermann W."/>
            <person name="Wedler H."/>
            <person name="Wambutt R."/>
            <person name="Purnelle B."/>
            <person name="Goffeau A."/>
            <person name="Cadieu E."/>
            <person name="Dreano S."/>
            <person name="Gloux S."/>
            <person name="Lelaure V."/>
            <person name="Mottier S."/>
            <person name="Galibert F."/>
            <person name="Aves S.J."/>
            <person name="Xiang Z."/>
            <person name="Hunt C."/>
            <person name="Moore K."/>
            <person name="Hurst S.M."/>
            <person name="Lucas M."/>
            <person name="Rochet M."/>
            <person name="Gaillardin C."/>
            <person name="Tallada V.A."/>
            <person name="Garzon A."/>
            <person name="Thode G."/>
            <person name="Daga R.R."/>
            <person name="Cruzado L."/>
            <person name="Jimenez J."/>
            <person name="Sanchez M."/>
            <person name="del Rey F."/>
            <person name="Benito J."/>
            <person name="Dominguez A."/>
            <person name="Revuelta J.L."/>
            <person name="Moreno S."/>
            <person name="Armstrong J."/>
            <person name="Forsburg S.L."/>
            <person name="Cerutti L."/>
            <person name="Lowe T."/>
            <person name="McCombie W.R."/>
            <person name="Paulsen I."/>
            <person name="Potashkin J."/>
            <person name="Shpakovski G.V."/>
            <person name="Ussery D."/>
            <person name="Barrell B.G."/>
            <person name="Nurse P."/>
        </authorList>
    </citation>
    <scope>NUCLEOTIDE SEQUENCE [LARGE SCALE GENOMIC DNA]</scope>
    <source>
        <strain>972 / ATCC 24843</strain>
    </source>
</reference>
<reference key="2">
    <citation type="journal article" date="2003" name="Genome Res.">
        <title>Retrotransposons and their recognition of pol II promoters: a comprehensive survey of the transposable elements from the complete genome sequence of Schizosaccharomyces pombe.</title>
        <authorList>
            <person name="Bowen N.J."/>
            <person name="Jordan I.K."/>
            <person name="Epstein J.A."/>
            <person name="Wood V."/>
            <person name="Levin H.L."/>
        </authorList>
    </citation>
    <scope>NOMENCLATURE</scope>
</reference>
<keyword id="KW-0064">Aspartyl protease</keyword>
<keyword id="KW-0229">DNA integration</keyword>
<keyword id="KW-0233">DNA recombination</keyword>
<keyword id="KW-0238">DNA-binding</keyword>
<keyword id="KW-0239">DNA-directed DNA polymerase</keyword>
<keyword id="KW-0255">Endonuclease</keyword>
<keyword id="KW-0378">Hydrolase</keyword>
<keyword id="KW-0460">Magnesium</keyword>
<keyword id="KW-0479">Metal-binding</keyword>
<keyword id="KW-0511">Multifunctional enzyme</keyword>
<keyword id="KW-0540">Nuclease</keyword>
<keyword id="KW-0548">Nucleotidyltransferase</keyword>
<keyword id="KW-0645">Protease</keyword>
<keyword id="KW-1185">Reference proteome</keyword>
<keyword id="KW-0694">RNA-binding</keyword>
<keyword id="KW-0695">RNA-directed DNA polymerase</keyword>
<keyword id="KW-0808">Transferase</keyword>
<keyword id="KW-0814">Transposable element</keyword>
<gene>
    <name type="primary">Tf2-11</name>
    <name type="ORF">SPBC1289.17</name>
    <name type="ORF">SPBC8E4.11c</name>
</gene>
<feature type="chain" id="PRO_0000097506" description="Transposon Tf2-11 polyprotein">
    <location>
        <begin position="1"/>
        <end position="1333"/>
    </location>
</feature>
<feature type="domain" description="Peptidase A2">
    <location>
        <begin position="266"/>
        <end position="342"/>
    </location>
</feature>
<feature type="domain" description="Reverse transcriptase" evidence="2">
    <location>
        <begin position="436"/>
        <end position="615"/>
    </location>
</feature>
<feature type="domain" description="Integrase catalytic" evidence="3">
    <location>
        <begin position="979"/>
        <end position="1138"/>
    </location>
</feature>
<feature type="active site" description="For protease activity" evidence="4">
    <location>
        <position position="271"/>
    </location>
</feature>
<feature type="binding site" evidence="1">
    <location>
        <position position="502"/>
    </location>
    <ligand>
        <name>Mg(2+)</name>
        <dbReference type="ChEBI" id="CHEBI:18420"/>
        <label>1</label>
        <note>catalytic; for reverse transcriptase activity</note>
    </ligand>
</feature>
<feature type="binding site" evidence="1">
    <location>
        <position position="566"/>
    </location>
    <ligand>
        <name>Mg(2+)</name>
        <dbReference type="ChEBI" id="CHEBI:18420"/>
        <label>1</label>
        <note>catalytic; for reverse transcriptase activity</note>
    </ligand>
</feature>
<feature type="binding site" evidence="1">
    <location>
        <position position="567"/>
    </location>
    <ligand>
        <name>Mg(2+)</name>
        <dbReference type="ChEBI" id="CHEBI:18420"/>
        <label>1</label>
        <note>catalytic; for reverse transcriptase activity</note>
    </ligand>
</feature>
<feature type="binding site" evidence="1">
    <location>
        <position position="990"/>
    </location>
    <ligand>
        <name>Mg(2+)</name>
        <dbReference type="ChEBI" id="CHEBI:18420"/>
        <label>2</label>
        <note>catalytic; for integrase activity</note>
    </ligand>
</feature>
<feature type="binding site" evidence="1">
    <location>
        <position position="1050"/>
    </location>
    <ligand>
        <name>Mg(2+)</name>
        <dbReference type="ChEBI" id="CHEBI:18420"/>
        <label>2</label>
        <note>catalytic; for integrase activity</note>
    </ligand>
</feature>